<dbReference type="EC" id="3.2.1.67"/>
<dbReference type="EMBL" id="CP001936">
    <property type="protein sequence ID" value="ADD02978.1"/>
    <property type="molecule type" value="Genomic_DNA"/>
</dbReference>
<dbReference type="RefSeq" id="WP_012995698.1">
    <property type="nucleotide sequence ID" value="NC_013921.1"/>
</dbReference>
<dbReference type="SMR" id="D3T426"/>
<dbReference type="CAZy" id="GH4">
    <property type="family name" value="Glycoside Hydrolase Family 4"/>
</dbReference>
<dbReference type="KEGG" id="tit:Thit_1733"/>
<dbReference type="eggNOG" id="COG1486">
    <property type="taxonomic scope" value="Bacteria"/>
</dbReference>
<dbReference type="HOGENOM" id="CLU_045951_1_1_9"/>
<dbReference type="OrthoDB" id="9808275at2"/>
<dbReference type="Proteomes" id="UP000001552">
    <property type="component" value="Chromosome"/>
</dbReference>
<dbReference type="GO" id="GO:0047911">
    <property type="term" value="F:galacturan 1,4-alpha-galacturonidase activity"/>
    <property type="evidence" value="ECO:0007669"/>
    <property type="project" value="UniProtKB-EC"/>
</dbReference>
<dbReference type="GO" id="GO:0046872">
    <property type="term" value="F:metal ion binding"/>
    <property type="evidence" value="ECO:0007669"/>
    <property type="project" value="UniProtKB-KW"/>
</dbReference>
<dbReference type="GO" id="GO:0016616">
    <property type="term" value="F:oxidoreductase activity, acting on the CH-OH group of donors, NAD or NADP as acceptor"/>
    <property type="evidence" value="ECO:0007669"/>
    <property type="project" value="InterPro"/>
</dbReference>
<dbReference type="GO" id="GO:0005975">
    <property type="term" value="P:carbohydrate metabolic process"/>
    <property type="evidence" value="ECO:0007669"/>
    <property type="project" value="InterPro"/>
</dbReference>
<dbReference type="Gene3D" id="3.90.1820.10">
    <property type="entry name" value="AglA-like glucosidase"/>
    <property type="match status" value="1"/>
</dbReference>
<dbReference type="InterPro" id="IPR053715">
    <property type="entry name" value="GH4_Enzyme_sf"/>
</dbReference>
<dbReference type="InterPro" id="IPR001088">
    <property type="entry name" value="Glyco_hydro_4"/>
</dbReference>
<dbReference type="InterPro" id="IPR022616">
    <property type="entry name" value="Glyco_hydro_4_C"/>
</dbReference>
<dbReference type="InterPro" id="IPR015955">
    <property type="entry name" value="Lactate_DH/Glyco_Ohase_4_C"/>
</dbReference>
<dbReference type="InterPro" id="IPR036291">
    <property type="entry name" value="NAD(P)-bd_dom_sf"/>
</dbReference>
<dbReference type="PANTHER" id="PTHR32092">
    <property type="entry name" value="6-PHOSPHO-BETA-GLUCOSIDASE-RELATED"/>
    <property type="match status" value="1"/>
</dbReference>
<dbReference type="PANTHER" id="PTHR32092:SF2">
    <property type="entry name" value="ALPHA-GALACTURONIDASE"/>
    <property type="match status" value="1"/>
</dbReference>
<dbReference type="Pfam" id="PF02056">
    <property type="entry name" value="Glyco_hydro_4"/>
    <property type="match status" value="1"/>
</dbReference>
<dbReference type="Pfam" id="PF11975">
    <property type="entry name" value="Glyco_hydro_4C"/>
    <property type="match status" value="1"/>
</dbReference>
<dbReference type="PRINTS" id="PR00732">
    <property type="entry name" value="GLHYDRLASE4"/>
</dbReference>
<dbReference type="SUPFAM" id="SSF56327">
    <property type="entry name" value="LDH C-terminal domain-like"/>
    <property type="match status" value="1"/>
</dbReference>
<dbReference type="SUPFAM" id="SSF51735">
    <property type="entry name" value="NAD(P)-binding Rossmann-fold domains"/>
    <property type="match status" value="1"/>
</dbReference>
<comment type="function">
    <text evidence="2">Alpha-galacturonidase able to catalyze the hydrolysis of the chromogenic substrate p-nitrophenyl-alpha-D-galacturonic acid (pNPalphaGalUA). It is probable that alpha-1,4-di-galacturonate (GalUA(2)) is the naturally occurring substrate.</text>
</comment>
<comment type="catalytic activity">
    <reaction evidence="2">
        <text>[(1-&gt;4)-alpha-D-galacturonosyl](n) + H2O = alpha-D-galacturonate + [(1-&gt;4)-alpha-D-galacturonosyl](n-1)</text>
        <dbReference type="Rhea" id="RHEA:14117"/>
        <dbReference type="Rhea" id="RHEA-COMP:14570"/>
        <dbReference type="Rhea" id="RHEA-COMP:14572"/>
        <dbReference type="ChEBI" id="CHEBI:15377"/>
        <dbReference type="ChEBI" id="CHEBI:58658"/>
        <dbReference type="ChEBI" id="CHEBI:140523"/>
        <dbReference type="EC" id="3.2.1.67"/>
    </reaction>
</comment>
<comment type="cofactor">
    <cofactor evidence="4">
        <name>NAD(+)</name>
        <dbReference type="ChEBI" id="CHEBI:57540"/>
    </cofactor>
</comment>
<comment type="cofactor">
    <cofactor evidence="4">
        <name>Mn(2+)</name>
        <dbReference type="ChEBI" id="CHEBI:29035"/>
    </cofactor>
    <text evidence="4">Binds 1 Mn(2+) ion per subunit.</text>
</comment>
<comment type="subunit">
    <text evidence="1">Homotetramer.</text>
</comment>
<comment type="similarity">
    <text evidence="3">Belongs to the glycosyl hydrolase 4 family.</text>
</comment>
<accession>D3T426</accession>
<organism>
    <name type="scientific">Thermoanaerobacter italicus (strain DSM 9252 / Ab9)</name>
    <dbReference type="NCBI Taxonomy" id="580331"/>
    <lineage>
        <taxon>Bacteria</taxon>
        <taxon>Bacillati</taxon>
        <taxon>Bacillota</taxon>
        <taxon>Clostridia</taxon>
        <taxon>Thermoanaerobacterales</taxon>
        <taxon>Thermoanaerobacteraceae</taxon>
        <taxon>Thermoanaerobacter</taxon>
    </lineage>
</organism>
<name>LPLD_THEIA</name>
<sequence>MKYNGDKVEGIKIAYIGGGSRGWAWRLMSDLALEQSLSGTVYLYDIDYEAAKTNEIIGNNLKSQWEYKSVDSMEEALKGADFVIISILPGTFNEMMSDVHTPEKFGIYQSVGDTTGPGGLFRALRTIPLYVEFANKIKKYCPEAWVINYTNPMALCVKTLYETFPKIKAFGCCHEVFSTQNLIAKAAKEIEGIECSREDIRTNVLGINHFTWIDKATYKNIDLIPVYKKFVEKYFESGYEDRGDWKESYFNSANKVKFDLFNKYGIIAAAGDRHLAEFIPFFGYLENPEAVAKWKFHLTPVSWRIKNREELIKKSKKMAKGEEKFEIEPSGEEGVKQMKALLGLGDLITNVNLPNRGQMEGVEFNTVVETNAFFTKDRVQPIISGKLPDTVNMLLSPHVLNQKMIFEAAIKKDKELVFHAFLNDPFVRKLTYSDAKKLFNEMFDNAREYLKGW</sequence>
<evidence type="ECO:0000250" key="1"/>
<evidence type="ECO:0000269" key="2">
    <source>
    </source>
</evidence>
<evidence type="ECO:0000305" key="3"/>
<evidence type="ECO:0000305" key="4">
    <source>
    </source>
</evidence>
<proteinExistence type="evidence at protein level"/>
<gene>
    <name type="ordered locus">Thit_1733</name>
</gene>
<feature type="chain" id="PRO_0000422164" description="Alpha-galacturonidase">
    <location>
        <begin position="1"/>
        <end position="453"/>
    </location>
</feature>
<feature type="active site" description="Proton donor" evidence="1">
    <location>
        <position position="174"/>
    </location>
</feature>
<feature type="binding site" evidence="1">
    <location>
        <begin position="11"/>
        <end position="72"/>
    </location>
    <ligand>
        <name>NAD(+)</name>
        <dbReference type="ChEBI" id="CHEBI:57540"/>
    </ligand>
</feature>
<feature type="binding site" evidence="1">
    <location>
        <position position="151"/>
    </location>
    <ligand>
        <name>substrate</name>
    </ligand>
</feature>
<feature type="binding site" evidence="1">
    <location>
        <position position="173"/>
    </location>
    <ligand>
        <name>Mn(2+)</name>
        <dbReference type="ChEBI" id="CHEBI:29035"/>
    </ligand>
</feature>
<feature type="binding site" evidence="1">
    <location>
        <position position="209"/>
    </location>
    <ligand>
        <name>Mn(2+)</name>
        <dbReference type="ChEBI" id="CHEBI:29035"/>
    </ligand>
</feature>
<protein>
    <recommendedName>
        <fullName>Alpha-galacturonidase</fullName>
        <ecNumber>3.2.1.67</ecNumber>
    </recommendedName>
</protein>
<reference key="1">
    <citation type="submission" date="2010-02" db="EMBL/GenBank/DDBJ databases">
        <title>Complete sequence of Thermoanaerobacter italicus Ab9.</title>
        <authorList>
            <consortium name="US DOE Joint Genome Institute"/>
            <person name="Lucas S."/>
            <person name="Copeland A."/>
            <person name="Lapidus A."/>
            <person name="Cheng J.-F."/>
            <person name="Bruce D."/>
            <person name="Goodwin L."/>
            <person name="Pitluck S."/>
            <person name="Chertkov O."/>
            <person name="Detter J.C."/>
            <person name="Han C."/>
            <person name="Tapia R."/>
            <person name="Land M."/>
            <person name="Hauser L."/>
            <person name="Kyrpides N."/>
            <person name="Mikhailova N."/>
            <person name="Hemme C.L."/>
            <person name="Woyke T."/>
        </authorList>
    </citation>
    <scope>NUCLEOTIDE SEQUENCE [LARGE SCALE GENOMIC DNA]</scope>
    <source>
        <strain>DSM 9252 / JCM 16815 / Ab9</strain>
    </source>
</reference>
<reference key="2">
    <citation type="journal article" date="2013" name="FEBS Lett.">
        <title>alpha-Galacturonidase(s): A new class of Family 4 glycoside hydrolases with strict specificity and a unique CHEV active site motif.</title>
        <authorList>
            <person name="Thompson J."/>
            <person name="Pikis A."/>
            <person name="Rich J."/>
            <person name="Hall B.G."/>
            <person name="Withers S.G."/>
        </authorList>
    </citation>
    <scope>FUNCTION</scope>
    <scope>CATALYTIC ACTIVITY</scope>
    <scope>COFACTOR</scope>
    <source>
        <strain>DSM 9252 / JCM 16815 / Ab9</strain>
    </source>
</reference>
<keyword id="KW-0119">Carbohydrate metabolism</keyword>
<keyword id="KW-0326">Glycosidase</keyword>
<keyword id="KW-0378">Hydrolase</keyword>
<keyword id="KW-0464">Manganese</keyword>
<keyword id="KW-0479">Metal-binding</keyword>
<keyword id="KW-0520">NAD</keyword>